<feature type="chain" id="PRO_0000192199" description="33 kDa chaperonin">
    <location>
        <begin position="1"/>
        <end position="293"/>
    </location>
</feature>
<feature type="disulfide bond" description="Redox-active" evidence="1">
    <location>
        <begin position="238"/>
        <end position="240"/>
    </location>
</feature>
<feature type="disulfide bond" description="Redox-active" evidence="1">
    <location>
        <begin position="271"/>
        <end position="274"/>
    </location>
</feature>
<keyword id="KW-0143">Chaperone</keyword>
<keyword id="KW-0963">Cytoplasm</keyword>
<keyword id="KW-1015">Disulfide bond</keyword>
<keyword id="KW-0676">Redox-active center</keyword>
<keyword id="KW-0862">Zinc</keyword>
<name>HSLO_STAAC</name>
<reference key="1">
    <citation type="journal article" date="2005" name="J. Bacteriol.">
        <title>Insights on evolution of virulence and resistance from the complete genome analysis of an early methicillin-resistant Staphylococcus aureus strain and a biofilm-producing methicillin-resistant Staphylococcus epidermidis strain.</title>
        <authorList>
            <person name="Gill S.R."/>
            <person name="Fouts D.E."/>
            <person name="Archer G.L."/>
            <person name="Mongodin E.F."/>
            <person name="DeBoy R.T."/>
            <person name="Ravel J."/>
            <person name="Paulsen I.T."/>
            <person name="Kolonay J.F."/>
            <person name="Brinkac L.M."/>
            <person name="Beanan M.J."/>
            <person name="Dodson R.J."/>
            <person name="Daugherty S.C."/>
            <person name="Madupu R."/>
            <person name="Angiuoli S.V."/>
            <person name="Durkin A.S."/>
            <person name="Haft D.H."/>
            <person name="Vamathevan J.J."/>
            <person name="Khouri H."/>
            <person name="Utterback T.R."/>
            <person name="Lee C."/>
            <person name="Dimitrov G."/>
            <person name="Jiang L."/>
            <person name="Qin H."/>
            <person name="Weidman J."/>
            <person name="Tran K."/>
            <person name="Kang K.H."/>
            <person name="Hance I.R."/>
            <person name="Nelson K.E."/>
            <person name="Fraser C.M."/>
        </authorList>
    </citation>
    <scope>NUCLEOTIDE SEQUENCE [LARGE SCALE GENOMIC DNA]</scope>
    <source>
        <strain>COL</strain>
    </source>
</reference>
<protein>
    <recommendedName>
        <fullName evidence="1">33 kDa chaperonin</fullName>
    </recommendedName>
    <alternativeName>
        <fullName evidence="1">Heat shock protein 33 homolog</fullName>
        <shortName evidence="1">HSP33</shortName>
    </alternativeName>
</protein>
<proteinExistence type="inferred from homology"/>
<gene>
    <name evidence="1" type="primary">hslO</name>
    <name type="ordered locus">SACOL0556</name>
</gene>
<dbReference type="EMBL" id="CP000046">
    <property type="protein sequence ID" value="AAW37668.1"/>
    <property type="molecule type" value="Genomic_DNA"/>
</dbReference>
<dbReference type="RefSeq" id="WP_000148605.1">
    <property type="nucleotide sequence ID" value="NZ_JBGOFO010000012.1"/>
</dbReference>
<dbReference type="SMR" id="Q5HIG3"/>
<dbReference type="KEGG" id="sac:SACOL0556"/>
<dbReference type="HOGENOM" id="CLU_054493_1_0_9"/>
<dbReference type="Proteomes" id="UP000000530">
    <property type="component" value="Chromosome"/>
</dbReference>
<dbReference type="GO" id="GO:0005737">
    <property type="term" value="C:cytoplasm"/>
    <property type="evidence" value="ECO:0007669"/>
    <property type="project" value="UniProtKB-SubCell"/>
</dbReference>
<dbReference type="GO" id="GO:0044183">
    <property type="term" value="F:protein folding chaperone"/>
    <property type="evidence" value="ECO:0007669"/>
    <property type="project" value="TreeGrafter"/>
</dbReference>
<dbReference type="GO" id="GO:0051082">
    <property type="term" value="F:unfolded protein binding"/>
    <property type="evidence" value="ECO:0007669"/>
    <property type="project" value="UniProtKB-UniRule"/>
</dbReference>
<dbReference type="GO" id="GO:0042026">
    <property type="term" value="P:protein refolding"/>
    <property type="evidence" value="ECO:0007669"/>
    <property type="project" value="TreeGrafter"/>
</dbReference>
<dbReference type="CDD" id="cd00498">
    <property type="entry name" value="Hsp33"/>
    <property type="match status" value="1"/>
</dbReference>
<dbReference type="Gene3D" id="3.55.30.10">
    <property type="entry name" value="Hsp33 domain"/>
    <property type="match status" value="1"/>
</dbReference>
<dbReference type="Gene3D" id="3.90.1280.10">
    <property type="entry name" value="HSP33 redox switch-like"/>
    <property type="match status" value="1"/>
</dbReference>
<dbReference type="HAMAP" id="MF_00117">
    <property type="entry name" value="HslO"/>
    <property type="match status" value="1"/>
</dbReference>
<dbReference type="InterPro" id="IPR000397">
    <property type="entry name" value="Heat_shock_Hsp33"/>
</dbReference>
<dbReference type="InterPro" id="IPR016154">
    <property type="entry name" value="Heat_shock_Hsp33_C"/>
</dbReference>
<dbReference type="InterPro" id="IPR016153">
    <property type="entry name" value="Heat_shock_Hsp33_N"/>
</dbReference>
<dbReference type="NCBIfam" id="NF001033">
    <property type="entry name" value="PRK00114.1"/>
    <property type="match status" value="1"/>
</dbReference>
<dbReference type="PANTHER" id="PTHR30111">
    <property type="entry name" value="33 KDA CHAPERONIN"/>
    <property type="match status" value="1"/>
</dbReference>
<dbReference type="PANTHER" id="PTHR30111:SF1">
    <property type="entry name" value="33 KDA CHAPERONIN"/>
    <property type="match status" value="1"/>
</dbReference>
<dbReference type="Pfam" id="PF01430">
    <property type="entry name" value="HSP33"/>
    <property type="match status" value="1"/>
</dbReference>
<dbReference type="PIRSF" id="PIRSF005261">
    <property type="entry name" value="Heat_shock_Hsp33"/>
    <property type="match status" value="1"/>
</dbReference>
<dbReference type="SUPFAM" id="SSF64397">
    <property type="entry name" value="Hsp33 domain"/>
    <property type="match status" value="1"/>
</dbReference>
<dbReference type="SUPFAM" id="SSF118352">
    <property type="entry name" value="HSP33 redox switch-like"/>
    <property type="match status" value="1"/>
</dbReference>
<accession>Q5HIG3</accession>
<evidence type="ECO:0000255" key="1">
    <source>
        <dbReference type="HAMAP-Rule" id="MF_00117"/>
    </source>
</evidence>
<comment type="function">
    <text evidence="1">Redox regulated molecular chaperone. Protects both thermally unfolding and oxidatively damaged proteins from irreversible aggregation. Plays an important role in the bacterial defense system toward oxidative stress.</text>
</comment>
<comment type="subcellular location">
    <subcellularLocation>
        <location evidence="1">Cytoplasm</location>
    </subcellularLocation>
</comment>
<comment type="PTM">
    <text evidence="1">Under oxidizing conditions two disulfide bonds are formed involving the reactive cysteines. Under reducing conditions zinc is bound to the reactive cysteines and the protein is inactive.</text>
</comment>
<comment type="similarity">
    <text evidence="1">Belongs to the HSP33 family.</text>
</comment>
<organism>
    <name type="scientific">Staphylococcus aureus (strain COL)</name>
    <dbReference type="NCBI Taxonomy" id="93062"/>
    <lineage>
        <taxon>Bacteria</taxon>
        <taxon>Bacillati</taxon>
        <taxon>Bacillota</taxon>
        <taxon>Bacilli</taxon>
        <taxon>Bacillales</taxon>
        <taxon>Staphylococcaceae</taxon>
        <taxon>Staphylococcus</taxon>
    </lineage>
</organism>
<sequence>MTHDYIVKALAFDGEIRAYAALTTETVQEAQTRHYTWPTASAAMGRTMTATAMMGAMLKGDQKLTVTVDGQGPIGRIIADANAKGEVRAYVDHPQTHFPLNEQGKLDVRRAVGTNGSIMVVKDVGMKDYFSGASPIVSGELGEDFTYYYATSEQTPSSVGLGVLVNPDNTIKAAGGFIIQVMPGAKDETISKLEKAISEMTPVSKLIEQGLTPEGLLNEILGEDHVQILEKMPVQFECNCSHEKFLNAIKGLGEAEIQNMIKEDHGAEAVCHFCGNKYKYTEEELNVLLESLA</sequence>